<proteinExistence type="evidence at transcript level"/>
<evidence type="ECO:0000250" key="1"/>
<evidence type="ECO:0000250" key="2">
    <source>
        <dbReference type="UniProtKB" id="Q9Y5T4"/>
    </source>
</evidence>
<evidence type="ECO:0000255" key="3"/>
<evidence type="ECO:0000255" key="4">
    <source>
        <dbReference type="PROSITE-ProRule" id="PRU00286"/>
    </source>
</evidence>
<accession>Q5RCP4</accession>
<reference key="1">
    <citation type="submission" date="2004-11" db="EMBL/GenBank/DDBJ databases">
        <authorList>
            <consortium name="The German cDNA consortium"/>
        </authorList>
    </citation>
    <scope>NUCLEOTIDE SEQUENCE [LARGE SCALE MRNA]</scope>
    <source>
        <tissue>Kidney</tissue>
    </source>
</reference>
<protein>
    <recommendedName>
        <fullName>DnaJ homolog subfamily C member 15</fullName>
    </recommendedName>
</protein>
<dbReference type="EMBL" id="CR858225">
    <property type="protein sequence ID" value="CAH90463.1"/>
    <property type="molecule type" value="mRNA"/>
</dbReference>
<dbReference type="RefSeq" id="NP_001127291.1">
    <property type="nucleotide sequence ID" value="NM_001133819.1"/>
</dbReference>
<dbReference type="SMR" id="Q5RCP4"/>
<dbReference type="FunCoup" id="Q5RCP4">
    <property type="interactions" value="106"/>
</dbReference>
<dbReference type="STRING" id="9601.ENSPPYP00000006063"/>
<dbReference type="Ensembl" id="ENSPPYT00000006300.3">
    <property type="protein sequence ID" value="ENSPPYP00000006063.3"/>
    <property type="gene ID" value="ENSPPYG00000005323.3"/>
</dbReference>
<dbReference type="GeneID" id="100174349"/>
<dbReference type="KEGG" id="pon:100174349"/>
<dbReference type="CTD" id="29103"/>
<dbReference type="eggNOG" id="KOG0723">
    <property type="taxonomic scope" value="Eukaryota"/>
</dbReference>
<dbReference type="GeneTree" id="ENSGT00940000159907"/>
<dbReference type="InParanoid" id="Q5RCP4"/>
<dbReference type="OMA" id="MRYAEYT"/>
<dbReference type="OrthoDB" id="240298at2759"/>
<dbReference type="Proteomes" id="UP000001595">
    <property type="component" value="Chromosome 13"/>
</dbReference>
<dbReference type="GO" id="GO:0001405">
    <property type="term" value="C:PAM complex, Tim23 associated import motor"/>
    <property type="evidence" value="ECO:0007669"/>
    <property type="project" value="TreeGrafter"/>
</dbReference>
<dbReference type="GO" id="GO:0001671">
    <property type="term" value="F:ATPase activator activity"/>
    <property type="evidence" value="ECO:0007669"/>
    <property type="project" value="TreeGrafter"/>
</dbReference>
<dbReference type="GO" id="GO:0009267">
    <property type="term" value="P:cellular response to starvation"/>
    <property type="evidence" value="ECO:0007669"/>
    <property type="project" value="Ensembl"/>
</dbReference>
<dbReference type="GO" id="GO:0006120">
    <property type="term" value="P:mitochondrial electron transport, NADH to ubiquinone"/>
    <property type="evidence" value="ECO:0007669"/>
    <property type="project" value="Ensembl"/>
</dbReference>
<dbReference type="GO" id="GO:1902957">
    <property type="term" value="P:negative regulation of mitochondrial electron transport, NADH to ubiquinone"/>
    <property type="evidence" value="ECO:0007669"/>
    <property type="project" value="Ensembl"/>
</dbReference>
<dbReference type="GO" id="GO:0031333">
    <property type="term" value="P:negative regulation of protein-containing complex assembly"/>
    <property type="evidence" value="ECO:0007669"/>
    <property type="project" value="Ensembl"/>
</dbReference>
<dbReference type="GO" id="GO:0030150">
    <property type="term" value="P:protein import into mitochondrial matrix"/>
    <property type="evidence" value="ECO:0007669"/>
    <property type="project" value="TreeGrafter"/>
</dbReference>
<dbReference type="GO" id="GO:0065003">
    <property type="term" value="P:protein-containing complex assembly"/>
    <property type="evidence" value="ECO:0007669"/>
    <property type="project" value="Ensembl"/>
</dbReference>
<dbReference type="GO" id="GO:0019216">
    <property type="term" value="P:regulation of lipid metabolic process"/>
    <property type="evidence" value="ECO:0007669"/>
    <property type="project" value="Ensembl"/>
</dbReference>
<dbReference type="CDD" id="cd06257">
    <property type="entry name" value="DnaJ"/>
    <property type="match status" value="1"/>
</dbReference>
<dbReference type="FunFam" id="1.10.287.110:FF:000001">
    <property type="entry name" value="Import inner membrane translocase subunit tim14"/>
    <property type="match status" value="1"/>
</dbReference>
<dbReference type="Gene3D" id="1.10.287.110">
    <property type="entry name" value="DnaJ domain"/>
    <property type="match status" value="1"/>
</dbReference>
<dbReference type="InterPro" id="IPR001623">
    <property type="entry name" value="DnaJ_domain"/>
</dbReference>
<dbReference type="InterPro" id="IPR036869">
    <property type="entry name" value="J_dom_sf"/>
</dbReference>
<dbReference type="PANTHER" id="PTHR12763">
    <property type="match status" value="1"/>
</dbReference>
<dbReference type="PANTHER" id="PTHR12763:SF7">
    <property type="entry name" value="DNAJ HOMOLOG SUBFAMILY C MEMBER 15"/>
    <property type="match status" value="1"/>
</dbReference>
<dbReference type="SMART" id="SM00271">
    <property type="entry name" value="DnaJ"/>
    <property type="match status" value="1"/>
</dbReference>
<dbReference type="SUPFAM" id="SSF46565">
    <property type="entry name" value="Chaperone J-domain"/>
    <property type="match status" value="1"/>
</dbReference>
<dbReference type="PROSITE" id="PS50076">
    <property type="entry name" value="DNAJ_2"/>
    <property type="match status" value="1"/>
</dbReference>
<keyword id="KW-0143">Chaperone</keyword>
<keyword id="KW-0472">Membrane</keyword>
<keyword id="KW-0496">Mitochondrion</keyword>
<keyword id="KW-0999">Mitochondrion inner membrane</keyword>
<keyword id="KW-0597">Phosphoprotein</keyword>
<keyword id="KW-0653">Protein transport</keyword>
<keyword id="KW-1185">Reference proteome</keyword>
<keyword id="KW-0811">Translocation</keyword>
<keyword id="KW-0812">Transmembrane</keyword>
<keyword id="KW-1133">Transmembrane helix</keyword>
<keyword id="KW-0813">Transport</keyword>
<name>DJC15_PONAB</name>
<comment type="function">
    <text evidence="1">Negative regulator of the mitochondrial respiratory chain. Prevents mitochondrial hyperpolarization state and restricts mitochondrial generation of ATP. Acts as an import component of the TIM23 translocase complex. Stimulates the ATPase activity of HSPA9 (By similarity).</text>
</comment>
<comment type="subunit">
    <text evidence="1">Interacts with the TIM23 complex (By similarity). Directly interacts with PAM16/MAGMAS; this interaction counteracts DNAJC15-dependent stimulation of HSPA9 ATPase activity. Associates with complex I of the mitochondrial electron transfer chain; this interaction may interfere with the formation of supercomplexes that facilitate the transfer of electrons between complexes (By similarity).</text>
</comment>
<comment type="subcellular location">
    <subcellularLocation>
        <location evidence="1">Mitochondrion inner membrane</location>
        <topology evidence="1">Single-pass membrane protein</topology>
    </subcellularLocation>
</comment>
<feature type="chain" id="PRO_0000247141" description="DnaJ homolog subfamily C member 15">
    <location>
        <begin position="1"/>
        <end position="150"/>
    </location>
</feature>
<feature type="topological domain" description="Mitochondrial intermembrane" evidence="3">
    <location>
        <begin position="1"/>
        <end position="34"/>
    </location>
</feature>
<feature type="transmembrane region" description="Helical" evidence="3">
    <location>
        <begin position="35"/>
        <end position="57"/>
    </location>
</feature>
<feature type="topological domain" description="Mitochondrial matrix" evidence="3">
    <location>
        <begin position="58"/>
        <end position="150"/>
    </location>
</feature>
<feature type="domain" description="J" evidence="4">
    <location>
        <begin position="96"/>
        <end position="150"/>
    </location>
</feature>
<feature type="modified residue" description="Phosphoserine" evidence="2">
    <location>
        <position position="104"/>
    </location>
</feature>
<organism>
    <name type="scientific">Pongo abelii</name>
    <name type="common">Sumatran orangutan</name>
    <name type="synonym">Pongo pygmaeus abelii</name>
    <dbReference type="NCBI Taxonomy" id="9601"/>
    <lineage>
        <taxon>Eukaryota</taxon>
        <taxon>Metazoa</taxon>
        <taxon>Chordata</taxon>
        <taxon>Craniata</taxon>
        <taxon>Vertebrata</taxon>
        <taxon>Euteleostomi</taxon>
        <taxon>Mammalia</taxon>
        <taxon>Eutheria</taxon>
        <taxon>Euarchontoglires</taxon>
        <taxon>Primates</taxon>
        <taxon>Haplorrhini</taxon>
        <taxon>Catarrhini</taxon>
        <taxon>Hominidae</taxon>
        <taxon>Pongo</taxon>
    </lineage>
</organism>
<gene>
    <name type="primary">DNAJC15</name>
</gene>
<sequence>MAARGVIAPVGESLRYAEYLQPSAKRPDADVDQQGLVRSLIAVGLGVAAFAFAGRYAFRIWKPLEQVITETAKKISTPSLSSYYKGGFEKKMSRREAGLILGVSPSAGKAKIRTAHRRVMILNHPDKGGSPYVAAKINEAKDLLETTTKH</sequence>